<proteinExistence type="inferred from homology"/>
<evidence type="ECO:0000255" key="1">
    <source>
        <dbReference type="HAMAP-Rule" id="MF_01703"/>
    </source>
</evidence>
<dbReference type="EC" id="7.5.2.6" evidence="1"/>
<dbReference type="EMBL" id="AE004969">
    <property type="protein sequence ID" value="AAW90759.1"/>
    <property type="molecule type" value="Genomic_DNA"/>
</dbReference>
<dbReference type="RefSeq" id="WP_010359721.1">
    <property type="nucleotide sequence ID" value="NC_002946.2"/>
</dbReference>
<dbReference type="RefSeq" id="YP_209171.1">
    <property type="nucleotide sequence ID" value="NC_002946.2"/>
</dbReference>
<dbReference type="SMR" id="Q5F4X8"/>
<dbReference type="STRING" id="242231.NGO_2165"/>
<dbReference type="KEGG" id="ngo:NGO_2165"/>
<dbReference type="PATRIC" id="fig|242231.10.peg.2615"/>
<dbReference type="HOGENOM" id="CLU_000604_84_3_4"/>
<dbReference type="Proteomes" id="UP000000535">
    <property type="component" value="Chromosome"/>
</dbReference>
<dbReference type="GO" id="GO:0005886">
    <property type="term" value="C:plasma membrane"/>
    <property type="evidence" value="ECO:0007669"/>
    <property type="project" value="UniProtKB-SubCell"/>
</dbReference>
<dbReference type="GO" id="GO:0015421">
    <property type="term" value="F:ABC-type oligopeptide transporter activity"/>
    <property type="evidence" value="ECO:0007669"/>
    <property type="project" value="TreeGrafter"/>
</dbReference>
<dbReference type="GO" id="GO:0005524">
    <property type="term" value="F:ATP binding"/>
    <property type="evidence" value="ECO:0007669"/>
    <property type="project" value="UniProtKB-KW"/>
</dbReference>
<dbReference type="GO" id="GO:0016887">
    <property type="term" value="F:ATP hydrolysis activity"/>
    <property type="evidence" value="ECO:0007669"/>
    <property type="project" value="InterPro"/>
</dbReference>
<dbReference type="GO" id="GO:0034040">
    <property type="term" value="F:ATPase-coupled lipid transmembrane transporter activity"/>
    <property type="evidence" value="ECO:0007669"/>
    <property type="project" value="InterPro"/>
</dbReference>
<dbReference type="CDD" id="cd18552">
    <property type="entry name" value="ABC_6TM_MsbA_like"/>
    <property type="match status" value="1"/>
</dbReference>
<dbReference type="CDD" id="cd03251">
    <property type="entry name" value="ABCC_MsbA"/>
    <property type="match status" value="1"/>
</dbReference>
<dbReference type="FunFam" id="3.40.50.300:FF:001001">
    <property type="entry name" value="Multidrug ABC transporter ATP-binding protein"/>
    <property type="match status" value="1"/>
</dbReference>
<dbReference type="Gene3D" id="1.20.1560.10">
    <property type="entry name" value="ABC transporter type 1, transmembrane domain"/>
    <property type="match status" value="1"/>
</dbReference>
<dbReference type="Gene3D" id="3.40.50.300">
    <property type="entry name" value="P-loop containing nucleotide triphosphate hydrolases"/>
    <property type="match status" value="1"/>
</dbReference>
<dbReference type="InterPro" id="IPR003593">
    <property type="entry name" value="AAA+_ATPase"/>
</dbReference>
<dbReference type="InterPro" id="IPR011527">
    <property type="entry name" value="ABC1_TM_dom"/>
</dbReference>
<dbReference type="InterPro" id="IPR036640">
    <property type="entry name" value="ABC1_TM_sf"/>
</dbReference>
<dbReference type="InterPro" id="IPR003439">
    <property type="entry name" value="ABC_transporter-like_ATP-bd"/>
</dbReference>
<dbReference type="InterPro" id="IPR017871">
    <property type="entry name" value="ABC_transporter-like_CS"/>
</dbReference>
<dbReference type="InterPro" id="IPR011917">
    <property type="entry name" value="ABC_transpr_lipidA"/>
</dbReference>
<dbReference type="InterPro" id="IPR027417">
    <property type="entry name" value="P-loop_NTPase"/>
</dbReference>
<dbReference type="InterPro" id="IPR039421">
    <property type="entry name" value="Type_1_exporter"/>
</dbReference>
<dbReference type="NCBIfam" id="TIGR02203">
    <property type="entry name" value="MsbA_lipidA"/>
    <property type="match status" value="1"/>
</dbReference>
<dbReference type="PANTHER" id="PTHR43394:SF1">
    <property type="entry name" value="ATP-BINDING CASSETTE SUB-FAMILY B MEMBER 10, MITOCHONDRIAL"/>
    <property type="match status" value="1"/>
</dbReference>
<dbReference type="PANTHER" id="PTHR43394">
    <property type="entry name" value="ATP-DEPENDENT PERMEASE MDL1, MITOCHONDRIAL"/>
    <property type="match status" value="1"/>
</dbReference>
<dbReference type="Pfam" id="PF00664">
    <property type="entry name" value="ABC_membrane"/>
    <property type="match status" value="1"/>
</dbReference>
<dbReference type="Pfam" id="PF00005">
    <property type="entry name" value="ABC_tran"/>
    <property type="match status" value="1"/>
</dbReference>
<dbReference type="SMART" id="SM00382">
    <property type="entry name" value="AAA"/>
    <property type="match status" value="1"/>
</dbReference>
<dbReference type="SUPFAM" id="SSF90123">
    <property type="entry name" value="ABC transporter transmembrane region"/>
    <property type="match status" value="1"/>
</dbReference>
<dbReference type="SUPFAM" id="SSF52540">
    <property type="entry name" value="P-loop containing nucleoside triphosphate hydrolases"/>
    <property type="match status" value="1"/>
</dbReference>
<dbReference type="PROSITE" id="PS50929">
    <property type="entry name" value="ABC_TM1F"/>
    <property type="match status" value="1"/>
</dbReference>
<dbReference type="PROSITE" id="PS00211">
    <property type="entry name" value="ABC_TRANSPORTER_1"/>
    <property type="match status" value="1"/>
</dbReference>
<dbReference type="PROSITE" id="PS50893">
    <property type="entry name" value="ABC_TRANSPORTER_2"/>
    <property type="match status" value="1"/>
</dbReference>
<dbReference type="PROSITE" id="PS51239">
    <property type="entry name" value="MSBA"/>
    <property type="match status" value="1"/>
</dbReference>
<comment type="function">
    <text evidence="1">Involved in lipopolysaccharide (LPS) biosynthesis. Translocates lipid A-core from the inner to the outer leaflet of the inner membrane. Transmembrane domains (TMD) form a pore in the inner membrane and the ATP-binding domain (NBD) is responsible for energy generation.</text>
</comment>
<comment type="catalytic activity">
    <reaction evidence="1">
        <text>ATP + H2O + lipid A-core oligosaccharideSide 1 = ADP + phosphate + lipid A-core oligosaccharideSide 2.</text>
        <dbReference type="EC" id="7.5.2.6"/>
    </reaction>
</comment>
<comment type="subunit">
    <text evidence="1">Homodimer.</text>
</comment>
<comment type="subcellular location">
    <subcellularLocation>
        <location evidence="1">Cell inner membrane</location>
        <topology evidence="1">Multi-pass membrane protein</topology>
    </subcellularLocation>
</comment>
<comment type="domain">
    <text evidence="1">In MsbA the ATP-binding domain (NBD) and the transmembrane domain (TMD) are fused.</text>
</comment>
<comment type="similarity">
    <text evidence="1">Belongs to the ABC transporter superfamily. Lipid exporter (TC 3.A.1.106) family.</text>
</comment>
<sequence>MIEKLTFGLFKKEDARSFMRLMAYVRPYKIRIVAALIAIFGVAATESYLAAFIAPLINHGFSAPAAPPDLSAAAGILSTLQNWREQFTYMVWGTENKIWTVPLFLIILVVIRGICRFTSTYLMTWVSVMTISKIRKDMFAKMLTLSSRYHQETPSGTVLMNMLNLTEQSVSNASDIFTVLTRDTMIVTGLTIVLLYLNWQLSLIVVLMFPLLSLLSRYYRDRLKHVISDSQKSIGTMNNVIAETHQGHRVVKLFNGQAQAANRFDAVNRTIVRLSKKITQATAAHSPFSELIASIALAVVIFIALWQSQNGYTTIGEFMAFIVAMLQMYAPIKSLANISIPMQTMFLAADGVCAFLDTPPEQDKGTLAPQRVEGRISFRNVDVEYRSDGIKALDNFNLDIRQGERVALVGRSGSGKSTVVNLLPRFVEPSAGNICIDGIDIADIKLDCLRAQFALVSQDVFLFDDTLFENVRYSRPDAGEAEVLSALQAANLQSLIDASPLGLHQPIGSNGSNLSGGQRQRVAIARAILKDAPILLLDEATSALDNESERLVQQALERLMENRTGIIVAHRLTTVESADRIIVMDGGKIIEQGTHDQLMFQNGYYTMLRNISGKDTAAVQTA</sequence>
<feature type="chain" id="PRO_0000271634" description="ATP-dependent lipid A-core flippase">
    <location>
        <begin position="1"/>
        <end position="622"/>
    </location>
</feature>
<feature type="transmembrane region" description="Helical" evidence="1">
    <location>
        <begin position="32"/>
        <end position="52"/>
    </location>
</feature>
<feature type="transmembrane region" description="Helical" evidence="1">
    <location>
        <begin position="91"/>
        <end position="111"/>
    </location>
</feature>
<feature type="transmembrane region" description="Helical" evidence="1">
    <location>
        <begin position="192"/>
        <end position="212"/>
    </location>
</feature>
<feature type="transmembrane region" description="Helical" evidence="1">
    <location>
        <begin position="286"/>
        <end position="306"/>
    </location>
</feature>
<feature type="transmembrane region" description="Helical" evidence="1">
    <location>
        <begin position="312"/>
        <end position="332"/>
    </location>
</feature>
<feature type="domain" description="ABC transmembrane type-1" evidence="1">
    <location>
        <begin position="33"/>
        <end position="344"/>
    </location>
</feature>
<feature type="domain" description="ABC transporter" evidence="1">
    <location>
        <begin position="378"/>
        <end position="611"/>
    </location>
</feature>
<feature type="binding site" evidence="1">
    <location>
        <begin position="410"/>
        <end position="417"/>
    </location>
    <ligand>
        <name>ATP</name>
        <dbReference type="ChEBI" id="CHEBI:30616"/>
    </ligand>
</feature>
<keyword id="KW-0067">ATP-binding</keyword>
<keyword id="KW-0997">Cell inner membrane</keyword>
<keyword id="KW-1003">Cell membrane</keyword>
<keyword id="KW-0445">Lipid transport</keyword>
<keyword id="KW-0472">Membrane</keyword>
<keyword id="KW-0547">Nucleotide-binding</keyword>
<keyword id="KW-1185">Reference proteome</keyword>
<keyword id="KW-1278">Translocase</keyword>
<keyword id="KW-0812">Transmembrane</keyword>
<keyword id="KW-1133">Transmembrane helix</keyword>
<keyword id="KW-0813">Transport</keyword>
<accession>Q5F4X8</accession>
<reference key="1">
    <citation type="submission" date="2003-03" db="EMBL/GenBank/DDBJ databases">
        <title>The complete genome sequence of Neisseria gonorrhoeae.</title>
        <authorList>
            <person name="Lewis L.A."/>
            <person name="Gillaspy A.F."/>
            <person name="McLaughlin R.E."/>
            <person name="Gipson M."/>
            <person name="Ducey T.F."/>
            <person name="Ownbey T."/>
            <person name="Hartman K."/>
            <person name="Nydick C."/>
            <person name="Carson M.B."/>
            <person name="Vaughn J."/>
            <person name="Thomson C."/>
            <person name="Song L."/>
            <person name="Lin S."/>
            <person name="Yuan X."/>
            <person name="Najar F."/>
            <person name="Zhan M."/>
            <person name="Ren Q."/>
            <person name="Zhu H."/>
            <person name="Qi S."/>
            <person name="Kenton S.M."/>
            <person name="Lai H."/>
            <person name="White J.D."/>
            <person name="Clifton S."/>
            <person name="Roe B.A."/>
            <person name="Dyer D.W."/>
        </authorList>
    </citation>
    <scope>NUCLEOTIDE SEQUENCE [LARGE SCALE GENOMIC DNA]</scope>
    <source>
        <strain>ATCC 700825 / FA 1090</strain>
    </source>
</reference>
<gene>
    <name evidence="1" type="primary">msbA</name>
    <name type="ordered locus">NGO_2165</name>
</gene>
<protein>
    <recommendedName>
        <fullName evidence="1">ATP-dependent lipid A-core flippase</fullName>
        <ecNumber evidence="1">7.5.2.6</ecNumber>
    </recommendedName>
    <alternativeName>
        <fullName evidence="1">Lipid A export ATP-binding/permease protein MsbA</fullName>
    </alternativeName>
</protein>
<organism>
    <name type="scientific">Neisseria gonorrhoeae (strain ATCC 700825 / FA 1090)</name>
    <dbReference type="NCBI Taxonomy" id="242231"/>
    <lineage>
        <taxon>Bacteria</taxon>
        <taxon>Pseudomonadati</taxon>
        <taxon>Pseudomonadota</taxon>
        <taxon>Betaproteobacteria</taxon>
        <taxon>Neisseriales</taxon>
        <taxon>Neisseriaceae</taxon>
        <taxon>Neisseria</taxon>
    </lineage>
</organism>
<name>MSBA_NEIG1</name>